<name>DPO3A_TREPA</name>
<dbReference type="EC" id="2.7.7.7"/>
<dbReference type="EMBL" id="AE000520">
    <property type="protein sequence ID" value="AAC26567.1"/>
    <property type="molecule type" value="Genomic_DNA"/>
</dbReference>
<dbReference type="PIR" id="H71295">
    <property type="entry name" value="H71295"/>
</dbReference>
<dbReference type="RefSeq" id="WP_010882114.1">
    <property type="nucleotide sequence ID" value="NC_021490.2"/>
</dbReference>
<dbReference type="SMR" id="O83675"/>
<dbReference type="IntAct" id="O83675">
    <property type="interactions" value="2"/>
</dbReference>
<dbReference type="STRING" id="243276.TP_0669"/>
<dbReference type="EnsemblBacteria" id="AAC26567">
    <property type="protein sequence ID" value="AAC26567"/>
    <property type="gene ID" value="TP_0669"/>
</dbReference>
<dbReference type="GeneID" id="93876437"/>
<dbReference type="KEGG" id="tpa:TP_0669"/>
<dbReference type="KEGG" id="tpw:TPANIC_0669"/>
<dbReference type="eggNOG" id="COG0587">
    <property type="taxonomic scope" value="Bacteria"/>
</dbReference>
<dbReference type="HOGENOM" id="CLU_001600_0_0_12"/>
<dbReference type="OrthoDB" id="9803237at2"/>
<dbReference type="Proteomes" id="UP000000811">
    <property type="component" value="Chromosome"/>
</dbReference>
<dbReference type="GO" id="GO:0005737">
    <property type="term" value="C:cytoplasm"/>
    <property type="evidence" value="ECO:0007669"/>
    <property type="project" value="UniProtKB-SubCell"/>
</dbReference>
<dbReference type="GO" id="GO:0008408">
    <property type="term" value="F:3'-5' exonuclease activity"/>
    <property type="evidence" value="ECO:0007669"/>
    <property type="project" value="InterPro"/>
</dbReference>
<dbReference type="GO" id="GO:0003887">
    <property type="term" value="F:DNA-directed DNA polymerase activity"/>
    <property type="evidence" value="ECO:0007669"/>
    <property type="project" value="UniProtKB-KW"/>
</dbReference>
<dbReference type="GO" id="GO:0006260">
    <property type="term" value="P:DNA replication"/>
    <property type="evidence" value="ECO:0007669"/>
    <property type="project" value="UniProtKB-KW"/>
</dbReference>
<dbReference type="CDD" id="cd04485">
    <property type="entry name" value="DnaE_OBF"/>
    <property type="match status" value="1"/>
</dbReference>
<dbReference type="CDD" id="cd12113">
    <property type="entry name" value="PHP_PolIIIA_DnaE3"/>
    <property type="match status" value="1"/>
</dbReference>
<dbReference type="Gene3D" id="1.10.150.870">
    <property type="match status" value="1"/>
</dbReference>
<dbReference type="Gene3D" id="1.10.10.1600">
    <property type="entry name" value="Bacterial DNA polymerase III alpha subunit, thumb domain"/>
    <property type="match status" value="1"/>
</dbReference>
<dbReference type="Gene3D" id="3.20.20.140">
    <property type="entry name" value="Metal-dependent hydrolases"/>
    <property type="match status" value="1"/>
</dbReference>
<dbReference type="InterPro" id="IPR011708">
    <property type="entry name" value="DNA_pol3_alpha_NTPase_dom"/>
</dbReference>
<dbReference type="InterPro" id="IPR041931">
    <property type="entry name" value="DNA_pol3_alpha_thumb_dom"/>
</dbReference>
<dbReference type="InterPro" id="IPR040982">
    <property type="entry name" value="DNA_pol3_finger"/>
</dbReference>
<dbReference type="InterPro" id="IPR004805">
    <property type="entry name" value="DnaE2/DnaE/PolC"/>
</dbReference>
<dbReference type="InterPro" id="IPR029460">
    <property type="entry name" value="DNAPol_HHH"/>
</dbReference>
<dbReference type="InterPro" id="IPR004013">
    <property type="entry name" value="PHP_dom"/>
</dbReference>
<dbReference type="InterPro" id="IPR003141">
    <property type="entry name" value="Pol/His_phosphatase_N"/>
</dbReference>
<dbReference type="InterPro" id="IPR016195">
    <property type="entry name" value="Pol/histidinol_Pase-like"/>
</dbReference>
<dbReference type="NCBIfam" id="TIGR00594">
    <property type="entry name" value="polc"/>
    <property type="match status" value="1"/>
</dbReference>
<dbReference type="NCBIfam" id="NF004226">
    <property type="entry name" value="PRK05673.1"/>
    <property type="match status" value="1"/>
</dbReference>
<dbReference type="NCBIfam" id="NF005298">
    <property type="entry name" value="PRK06826.1"/>
    <property type="match status" value="1"/>
</dbReference>
<dbReference type="PANTHER" id="PTHR32294">
    <property type="entry name" value="DNA POLYMERASE III SUBUNIT ALPHA"/>
    <property type="match status" value="1"/>
</dbReference>
<dbReference type="PANTHER" id="PTHR32294:SF0">
    <property type="entry name" value="DNA POLYMERASE III SUBUNIT ALPHA"/>
    <property type="match status" value="1"/>
</dbReference>
<dbReference type="Pfam" id="PF07733">
    <property type="entry name" value="DNA_pol3_alpha"/>
    <property type="match status" value="1"/>
</dbReference>
<dbReference type="Pfam" id="PF17657">
    <property type="entry name" value="DNA_pol3_finger"/>
    <property type="match status" value="1"/>
</dbReference>
<dbReference type="Pfam" id="PF14579">
    <property type="entry name" value="HHH_6"/>
    <property type="match status" value="1"/>
</dbReference>
<dbReference type="Pfam" id="PF02811">
    <property type="entry name" value="PHP"/>
    <property type="match status" value="1"/>
</dbReference>
<dbReference type="SMART" id="SM00481">
    <property type="entry name" value="POLIIIAc"/>
    <property type="match status" value="1"/>
</dbReference>
<dbReference type="SUPFAM" id="SSF89550">
    <property type="entry name" value="PHP domain-like"/>
    <property type="match status" value="1"/>
</dbReference>
<comment type="function">
    <text evidence="1">DNA polymerase III is a complex, multichain enzyme responsible for most of the replicative synthesis in bacteria. This DNA polymerase also exhibits 3' to 5' exonuclease activity. The alpha chain is the DNA polymerase (By similarity).</text>
</comment>
<comment type="catalytic activity">
    <reaction>
        <text>DNA(n) + a 2'-deoxyribonucleoside 5'-triphosphate = DNA(n+1) + diphosphate</text>
        <dbReference type="Rhea" id="RHEA:22508"/>
        <dbReference type="Rhea" id="RHEA-COMP:17339"/>
        <dbReference type="Rhea" id="RHEA-COMP:17340"/>
        <dbReference type="ChEBI" id="CHEBI:33019"/>
        <dbReference type="ChEBI" id="CHEBI:61560"/>
        <dbReference type="ChEBI" id="CHEBI:173112"/>
        <dbReference type="EC" id="2.7.7.7"/>
    </reaction>
</comment>
<comment type="subunit">
    <text evidence="1">DNA polymerase III contains a core (composed of alpha, epsilon and theta chains) that associates with a tau subunit. This core dimerizes to form the PolIII' complex. PolIII' associates with the gamma complex (composed of gamma, delta, delta', psi and chi chains) and with the beta chain to form the complete DNA polymerase III complex (By similarity).</text>
</comment>
<comment type="subcellular location">
    <subcellularLocation>
        <location evidence="1">Cytoplasm</location>
    </subcellularLocation>
</comment>
<comment type="similarity">
    <text evidence="2">Belongs to the DNA polymerase type-C family. DnaE subfamily.</text>
</comment>
<gene>
    <name type="primary">dnaE</name>
    <name type="ordered locus">TP_0669</name>
</gene>
<protein>
    <recommendedName>
        <fullName>DNA polymerase III subunit alpha</fullName>
        <ecNumber>2.7.7.7</ecNumber>
    </recommendedName>
</protein>
<proteinExistence type="inferred from homology"/>
<accession>O83675</accession>
<reference key="1">
    <citation type="journal article" date="1998" name="Science">
        <title>Complete genome sequence of Treponema pallidum, the syphilis spirochete.</title>
        <authorList>
            <person name="Fraser C.M."/>
            <person name="Norris S.J."/>
            <person name="Weinstock G.M."/>
            <person name="White O."/>
            <person name="Sutton G.G."/>
            <person name="Dodson R.J."/>
            <person name="Gwinn M.L."/>
            <person name="Hickey E.K."/>
            <person name="Clayton R.A."/>
            <person name="Ketchum K.A."/>
            <person name="Sodergren E."/>
            <person name="Hardham J.M."/>
            <person name="McLeod M.P."/>
            <person name="Salzberg S.L."/>
            <person name="Peterson J.D."/>
            <person name="Khalak H.G."/>
            <person name="Richardson D.L."/>
            <person name="Howell J.K."/>
            <person name="Chidambaram M."/>
            <person name="Utterback T.R."/>
            <person name="McDonald L.A."/>
            <person name="Artiach P."/>
            <person name="Bowman C."/>
            <person name="Cotton M.D."/>
            <person name="Fujii C."/>
            <person name="Garland S.A."/>
            <person name="Hatch B."/>
            <person name="Horst K."/>
            <person name="Roberts K.M."/>
            <person name="Sandusky M."/>
            <person name="Weidman J.F."/>
            <person name="Smith H.O."/>
            <person name="Venter J.C."/>
        </authorList>
    </citation>
    <scope>NUCLEOTIDE SEQUENCE [LARGE SCALE GENOMIC DNA]</scope>
    <source>
        <strain>Nichols</strain>
    </source>
</reference>
<evidence type="ECO:0000250" key="1"/>
<evidence type="ECO:0000305" key="2"/>
<organism>
    <name type="scientific">Treponema pallidum (strain Nichols)</name>
    <dbReference type="NCBI Taxonomy" id="243276"/>
    <lineage>
        <taxon>Bacteria</taxon>
        <taxon>Pseudomonadati</taxon>
        <taxon>Spirochaetota</taxon>
        <taxon>Spirochaetia</taxon>
        <taxon>Spirochaetales</taxon>
        <taxon>Treponemataceae</taxon>
        <taxon>Treponema</taxon>
    </lineage>
</organism>
<feature type="chain" id="PRO_0000103356" description="DNA polymerase III subunit alpha">
    <location>
        <begin position="1"/>
        <end position="1170"/>
    </location>
</feature>
<keyword id="KW-0963">Cytoplasm</keyword>
<keyword id="KW-0235">DNA replication</keyword>
<keyword id="KW-0239">DNA-directed DNA polymerase</keyword>
<keyword id="KW-0548">Nucleotidyltransferase</keyword>
<keyword id="KW-1185">Reference proteome</keyword>
<keyword id="KW-0808">Transferase</keyword>
<sequence length="1170" mass="132313">MARMSFVHLHVHSNYSLLDGASSLQRLVRTAKSLGQEALALTDHGNMFGALHFQKVCSAEGIKAIIGCELYVAPESRFDRSEHTIGRRYYHLIVLAKNETGYRNLMVLSSKAYIEGMYYKPRVDDELLAQHAEGLICLSSCLAGQLPYLLLQGRKREAEEHARKYRALFGVDNYFIEVQDHGLDEEKKVAPLLIELACRLGIPLVVTNDVHYAEQEDSVAQDILLCIGTKKNRSDPNRLKFKTDEFYLKSSEKMAQLFPHYPEMVLNTVRIAQRCNVRIPQPGPLLPLYQIPHEFSSKEHYIRHLVHRGLYDRYAVVSEEIKARADYELDVIVRMDFVGYFLIVWDFITWAKEHDIPVGPGRGSGASSIVAYALKITDIDPLRYKLLFERFMNPERISMPDFDIDFCFERRQEVIEYVRARYGNDNVGQIITFGTLKPKAAIRDVGRVLDIPLSEVLMITKLMPDDPKLTFKKAYESEQLAQMKQEPRYAELFQIAEKLEDTNRNTSLHAAGIVIGKTALTDYVPLYKDSKTGKISTQFGMDLIEDCGLVKMDFLGLKTLTLIQRTQNLVRRKGGKYTTFSISDISDQDPTTFSMLAEGKSAAVFQFESRGMQGILKRAKPSKMEDLIALNALYRPGPMAFIDQYIESKRDPGKIKYPDPCLEDILSETYGVIVYQEQVMQVAQRIAGFSLGEADILRRAMGKKKLAVMQEKKKEFAERAEKQGFDKKHAENIFEILIPFAGYGFNKSHATAYSVVAYQTAFLKANFPAEFMAANLSNEINSAEKLPLYMAEAEKMGLSIQKPDVNASEPYFSVCEGCIVYGLLGIKGLGEQVAFDVFDERIRNGPYTSFVEVLDRVPATSLNKKNAEIMIKAGCFDRFGVTRASLTAHLDDAMKYVARKKAVTSSRQASLFDETDLGECSEYTFPVMEEWSQRERLRIEKELMGYYISGHPLDEYRSVIGEKATLDLGHIENARSENKYLIVGVLNAIHPYTTKSGKNMAFGSFEDLHGSVDIVVFPVLWEEHRAQFLPETIMGLVGTVDFSKETPAFLVDSVIDLEQLRFAQVKTILAGSEHRRVSSGEKTPLQKRGVSQEVHIEVSSHVRAHAQFKSLYEILSAHTGGSGEVFLHMHVDDRTYVVYVPSCKVSATEVFAQQLKGNESFVQILKECVQ</sequence>